<accession>E7KBW4</accession>
<keyword id="KW-1003">Cell membrane</keyword>
<keyword id="KW-0966">Cell projection</keyword>
<keyword id="KW-0325">Glycoprotein</keyword>
<keyword id="KW-0472">Membrane</keyword>
<keyword id="KW-0597">Phosphoprotein</keyword>
<keyword id="KW-0728">SH3 domain</keyword>
<keyword id="KW-0346">Stress response</keyword>
<keyword id="KW-0812">Transmembrane</keyword>
<keyword id="KW-1133">Transmembrane helix</keyword>
<reference key="1">
    <citation type="journal article" date="2011" name="PLoS Genet.">
        <title>Whole-genome comparison reveals novel genetic elements that characterize the genome of industrial strains of Saccharomyces cerevisiae.</title>
        <authorList>
            <person name="Borneman A.R."/>
            <person name="Desany B.A."/>
            <person name="Riches D."/>
            <person name="Affourtit J.P."/>
            <person name="Forgan A.H."/>
            <person name="Pretorius I.S."/>
            <person name="Egholm M."/>
            <person name="Chambers P.J."/>
        </authorList>
    </citation>
    <scope>NUCLEOTIDE SEQUENCE [LARGE SCALE GENOMIC DNA]</scope>
    <source>
        <strain>AWRI796</strain>
    </source>
</reference>
<organism>
    <name type="scientific">Saccharomyces cerevisiae (strain AWRI796)</name>
    <name type="common">Baker's yeast</name>
    <dbReference type="NCBI Taxonomy" id="764097"/>
    <lineage>
        <taxon>Eukaryota</taxon>
        <taxon>Fungi</taxon>
        <taxon>Dikarya</taxon>
        <taxon>Ascomycota</taxon>
        <taxon>Saccharomycotina</taxon>
        <taxon>Saccharomycetes</taxon>
        <taxon>Saccharomycetales</taxon>
        <taxon>Saccharomycetaceae</taxon>
        <taxon>Saccharomyces</taxon>
    </lineage>
</organism>
<gene>
    <name type="primary">SHO1</name>
    <name type="synonym">SSU81</name>
    <name type="ORF">AWRI796_1396</name>
</gene>
<proteinExistence type="inferred from homology"/>
<comment type="function">
    <text evidence="1">Plasma membrane osmosensor that activates the high osmolarity glycerol (HOG) MAPK signaling pathway in response to high osmolarity. Detects changes in external osmolarity and activates PBS2 through the stimulation of STE11 and targets PBS2 to the plasma membrane. PBS2 activation leads to changes in glycerol production that helps to balance the intracellular and external osmotic pressures. Activates also HOG1 in response to heat stress and mediates resistance to oxidative stress. Involved in the regulation of the mating pathway. May be a receptor that feeds into the pseudohyphal growth pathway (By similarity).</text>
</comment>
<comment type="subunit">
    <text evidence="1">Forms homooligomers (By similarity). Interacts (via the SH3 domain) with PBS2. Interacts with FUS1, STE11, STE50 and RNA polymerase II (By similarity).</text>
</comment>
<comment type="subcellular location">
    <subcellularLocation>
        <location evidence="1">Cell membrane</location>
        <topology evidence="1">Multi-pass membrane protein</topology>
    </subcellularLocation>
    <subcellularLocation>
        <location evidence="1">Bud</location>
    </subcellularLocation>
    <subcellularLocation>
        <location evidence="1">Bud neck</location>
    </subcellularLocation>
    <subcellularLocation>
        <location evidence="1">Cell projection</location>
    </subcellularLocation>
    <text evidence="1">Localizes at the tip of the mating projection during conjugation.</text>
</comment>
<comment type="similarity">
    <text evidence="6">Belongs to the SHO1 family.</text>
</comment>
<sequence length="367" mass="41112">MSISSKIRPTPRKPSRMATDHSFKMKNFYADPFAISSISLAIVSWVIAIGGSISSASTNESFPRFTWWGIVYQFLIICSLMLFYCFDLVDHYRIFITTSIAVAFVYNTNSATNLVYADGPKKAAASAGVILLSIINLIWILYYGGDNASPTNRWIDSFSIKGIRPSPLENSLHRARRRGNRNTTPYQNNVYNDAIRDSGYATQFDGYPQQQPSHTNYVSSTALAGFENTQPNTSEAVNLHLNTLQQRINSASNAKETNDNSNNQTNTNIGNTFDTDFSNGNTETTMGDTLGLYSDIGDDNFIYKAKALYPYDADDDDAYEISFEQNEILQVSDIEGRWWKARRANGETGIIPSNYVQLIDGPEEMHR</sequence>
<evidence type="ECO:0000250" key="1"/>
<evidence type="ECO:0000250" key="2">
    <source>
        <dbReference type="UniProtKB" id="P40073"/>
    </source>
</evidence>
<evidence type="ECO:0000255" key="3"/>
<evidence type="ECO:0000255" key="4">
    <source>
        <dbReference type="PROSITE-ProRule" id="PRU00192"/>
    </source>
</evidence>
<evidence type="ECO:0000256" key="5">
    <source>
        <dbReference type="SAM" id="MobiDB-lite"/>
    </source>
</evidence>
<evidence type="ECO:0000305" key="6"/>
<protein>
    <recommendedName>
        <fullName>High osmolarity signaling protein SHO1</fullName>
    </recommendedName>
    <alternativeName>
        <fullName>Osmosensor SHO1</fullName>
    </alternativeName>
    <alternativeName>
        <fullName>Suppressor of SUA8-1 mutation</fullName>
    </alternativeName>
    <alternativeName>
        <fullName>Synthetic high osmolarity-sensitive protein 1</fullName>
    </alternativeName>
</protein>
<name>SHO1_YEASA</name>
<dbReference type="EMBL" id="ADVS01000021">
    <property type="protein sequence ID" value="EGA75180.1"/>
    <property type="molecule type" value="Genomic_DNA"/>
</dbReference>
<dbReference type="SMR" id="E7KBW4"/>
<dbReference type="GlyCosmos" id="E7KBW4">
    <property type="glycosylation" value="1 site, No reported glycans"/>
</dbReference>
<dbReference type="HOGENOM" id="CLU_043316_0_0_1"/>
<dbReference type="OMA" id="KNGKWWQ"/>
<dbReference type="OrthoDB" id="5983572at2759"/>
<dbReference type="GO" id="GO:0042995">
    <property type="term" value="C:cell projection"/>
    <property type="evidence" value="ECO:0007669"/>
    <property type="project" value="UniProtKB-SubCell"/>
</dbReference>
<dbReference type="GO" id="GO:0005935">
    <property type="term" value="C:cellular bud neck"/>
    <property type="evidence" value="ECO:0007669"/>
    <property type="project" value="UniProtKB-SubCell"/>
</dbReference>
<dbReference type="GO" id="GO:0005886">
    <property type="term" value="C:plasma membrane"/>
    <property type="evidence" value="ECO:0007669"/>
    <property type="project" value="UniProtKB-SubCell"/>
</dbReference>
<dbReference type="GO" id="GO:0030833">
    <property type="term" value="P:regulation of actin filament polymerization"/>
    <property type="evidence" value="ECO:0007669"/>
    <property type="project" value="TreeGrafter"/>
</dbReference>
<dbReference type="CDD" id="cd11855">
    <property type="entry name" value="SH3_Sho1p"/>
    <property type="match status" value="1"/>
</dbReference>
<dbReference type="FunFam" id="2.30.30.40:FF:000213">
    <property type="entry name" value="High osmolarity signaling protein SHO1"/>
    <property type="match status" value="1"/>
</dbReference>
<dbReference type="Gene3D" id="2.30.30.40">
    <property type="entry name" value="SH3 Domains"/>
    <property type="match status" value="1"/>
</dbReference>
<dbReference type="InterPro" id="IPR036028">
    <property type="entry name" value="SH3-like_dom_sf"/>
</dbReference>
<dbReference type="InterPro" id="IPR001452">
    <property type="entry name" value="SH3_domain"/>
</dbReference>
<dbReference type="InterPro" id="IPR035522">
    <property type="entry name" value="Sho1_SH3"/>
</dbReference>
<dbReference type="PANTHER" id="PTHR15735">
    <property type="entry name" value="FCH AND DOUBLE SH3 DOMAINS PROTEIN"/>
    <property type="match status" value="1"/>
</dbReference>
<dbReference type="PANTHER" id="PTHR15735:SF20">
    <property type="entry name" value="HIGH OSMOLARITY SIGNALING PROTEIN SHO1"/>
    <property type="match status" value="1"/>
</dbReference>
<dbReference type="Pfam" id="PF00018">
    <property type="entry name" value="SH3_1"/>
    <property type="match status" value="1"/>
</dbReference>
<dbReference type="PRINTS" id="PR00452">
    <property type="entry name" value="SH3DOMAIN"/>
</dbReference>
<dbReference type="SMART" id="SM00326">
    <property type="entry name" value="SH3"/>
    <property type="match status" value="1"/>
</dbReference>
<dbReference type="SUPFAM" id="SSF50044">
    <property type="entry name" value="SH3-domain"/>
    <property type="match status" value="1"/>
</dbReference>
<dbReference type="PROSITE" id="PS50002">
    <property type="entry name" value="SH3"/>
    <property type="match status" value="1"/>
</dbReference>
<feature type="chain" id="PRO_0000410412" description="High osmolarity signaling protein SHO1">
    <location>
        <begin position="1"/>
        <end position="367"/>
    </location>
</feature>
<feature type="topological domain" description="Cytoplasmic" evidence="3">
    <location>
        <begin position="1"/>
        <end position="32"/>
    </location>
</feature>
<feature type="transmembrane region" description="Helical" evidence="3">
    <location>
        <begin position="33"/>
        <end position="53"/>
    </location>
</feature>
<feature type="topological domain" description="Extracellular" evidence="3">
    <location>
        <begin position="54"/>
        <end position="65"/>
    </location>
</feature>
<feature type="transmembrane region" description="Helical" evidence="3">
    <location>
        <begin position="66"/>
        <end position="86"/>
    </location>
</feature>
<feature type="topological domain" description="Cytoplasmic" evidence="3">
    <location>
        <begin position="87"/>
        <end position="93"/>
    </location>
</feature>
<feature type="transmembrane region" description="Helical" evidence="3">
    <location>
        <begin position="94"/>
        <end position="114"/>
    </location>
</feature>
<feature type="topological domain" description="Extracellular" evidence="3">
    <location>
        <begin position="115"/>
        <end position="122"/>
    </location>
</feature>
<feature type="transmembrane region" description="Helical" evidence="3">
    <location>
        <begin position="123"/>
        <end position="143"/>
    </location>
</feature>
<feature type="topological domain" description="Cytoplasmic" evidence="3">
    <location>
        <begin position="144"/>
        <end position="367"/>
    </location>
</feature>
<feature type="domain" description="SH3" evidence="4">
    <location>
        <begin position="300"/>
        <end position="361"/>
    </location>
</feature>
<feature type="region of interest" description="Disordered" evidence="5">
    <location>
        <begin position="252"/>
        <end position="276"/>
    </location>
</feature>
<feature type="compositionally biased region" description="Low complexity" evidence="5">
    <location>
        <begin position="259"/>
        <end position="272"/>
    </location>
</feature>
<feature type="modified residue" description="Phosphoserine" evidence="2">
    <location>
        <position position="166"/>
    </location>
</feature>
<feature type="glycosylation site" description="N-linked (GlcNAc...) asparagine" evidence="3">
    <location>
        <position position="59"/>
    </location>
</feature>